<evidence type="ECO:0000255" key="1">
    <source>
        <dbReference type="HAMAP-Rule" id="MF_00038"/>
    </source>
</evidence>
<name>MRAY_PECCP</name>
<accession>C6DEU6</accession>
<dbReference type="EC" id="2.7.8.13" evidence="1"/>
<dbReference type="EMBL" id="CP001657">
    <property type="protein sequence ID" value="ACT14610.1"/>
    <property type="molecule type" value="Genomic_DNA"/>
</dbReference>
<dbReference type="RefSeq" id="WP_015841728.1">
    <property type="nucleotide sequence ID" value="NC_012917.1"/>
</dbReference>
<dbReference type="SMR" id="C6DEU6"/>
<dbReference type="STRING" id="561230.PC1_3595"/>
<dbReference type="GeneID" id="67792598"/>
<dbReference type="KEGG" id="pct:PC1_3595"/>
<dbReference type="eggNOG" id="COG0472">
    <property type="taxonomic scope" value="Bacteria"/>
</dbReference>
<dbReference type="HOGENOM" id="CLU_023982_0_0_6"/>
<dbReference type="OrthoDB" id="9805475at2"/>
<dbReference type="UniPathway" id="UPA00219"/>
<dbReference type="Proteomes" id="UP000002736">
    <property type="component" value="Chromosome"/>
</dbReference>
<dbReference type="GO" id="GO:0005886">
    <property type="term" value="C:plasma membrane"/>
    <property type="evidence" value="ECO:0007669"/>
    <property type="project" value="UniProtKB-SubCell"/>
</dbReference>
<dbReference type="GO" id="GO:0046872">
    <property type="term" value="F:metal ion binding"/>
    <property type="evidence" value="ECO:0007669"/>
    <property type="project" value="UniProtKB-KW"/>
</dbReference>
<dbReference type="GO" id="GO:0008963">
    <property type="term" value="F:phospho-N-acetylmuramoyl-pentapeptide-transferase activity"/>
    <property type="evidence" value="ECO:0007669"/>
    <property type="project" value="UniProtKB-UniRule"/>
</dbReference>
<dbReference type="GO" id="GO:0051992">
    <property type="term" value="F:UDP-N-acetylmuramoyl-L-alanyl-D-glutamyl-meso-2,6-diaminopimelyl-D-alanyl-D-alanine:undecaprenyl-phosphate transferase activity"/>
    <property type="evidence" value="ECO:0007669"/>
    <property type="project" value="RHEA"/>
</dbReference>
<dbReference type="GO" id="GO:0051301">
    <property type="term" value="P:cell division"/>
    <property type="evidence" value="ECO:0007669"/>
    <property type="project" value="UniProtKB-KW"/>
</dbReference>
<dbReference type="GO" id="GO:0071555">
    <property type="term" value="P:cell wall organization"/>
    <property type="evidence" value="ECO:0007669"/>
    <property type="project" value="UniProtKB-KW"/>
</dbReference>
<dbReference type="GO" id="GO:0009252">
    <property type="term" value="P:peptidoglycan biosynthetic process"/>
    <property type="evidence" value="ECO:0007669"/>
    <property type="project" value="UniProtKB-UniRule"/>
</dbReference>
<dbReference type="GO" id="GO:0008360">
    <property type="term" value="P:regulation of cell shape"/>
    <property type="evidence" value="ECO:0007669"/>
    <property type="project" value="UniProtKB-KW"/>
</dbReference>
<dbReference type="CDD" id="cd06852">
    <property type="entry name" value="GT_MraY"/>
    <property type="match status" value="1"/>
</dbReference>
<dbReference type="HAMAP" id="MF_00038">
    <property type="entry name" value="MraY"/>
    <property type="match status" value="1"/>
</dbReference>
<dbReference type="InterPro" id="IPR000715">
    <property type="entry name" value="Glycosyl_transferase_4"/>
</dbReference>
<dbReference type="InterPro" id="IPR003524">
    <property type="entry name" value="PNAcMuramoyl-5peptid_Trfase"/>
</dbReference>
<dbReference type="InterPro" id="IPR018480">
    <property type="entry name" value="PNAcMuramoyl-5peptid_Trfase_CS"/>
</dbReference>
<dbReference type="NCBIfam" id="TIGR00445">
    <property type="entry name" value="mraY"/>
    <property type="match status" value="1"/>
</dbReference>
<dbReference type="PANTHER" id="PTHR22926">
    <property type="entry name" value="PHOSPHO-N-ACETYLMURAMOYL-PENTAPEPTIDE-TRANSFERASE"/>
    <property type="match status" value="1"/>
</dbReference>
<dbReference type="PANTHER" id="PTHR22926:SF5">
    <property type="entry name" value="PHOSPHO-N-ACETYLMURAMOYL-PENTAPEPTIDE-TRANSFERASE HOMOLOG"/>
    <property type="match status" value="1"/>
</dbReference>
<dbReference type="Pfam" id="PF00953">
    <property type="entry name" value="Glycos_transf_4"/>
    <property type="match status" value="1"/>
</dbReference>
<dbReference type="Pfam" id="PF10555">
    <property type="entry name" value="MraY_sig1"/>
    <property type="match status" value="1"/>
</dbReference>
<dbReference type="PROSITE" id="PS01347">
    <property type="entry name" value="MRAY_1"/>
    <property type="match status" value="1"/>
</dbReference>
<dbReference type="PROSITE" id="PS01348">
    <property type="entry name" value="MRAY_2"/>
    <property type="match status" value="1"/>
</dbReference>
<feature type="chain" id="PRO_1000202074" description="Phospho-N-acetylmuramoyl-pentapeptide-transferase">
    <location>
        <begin position="1"/>
        <end position="360"/>
    </location>
</feature>
<feature type="transmembrane region" description="Helical" evidence="1">
    <location>
        <begin position="27"/>
        <end position="47"/>
    </location>
</feature>
<feature type="transmembrane region" description="Helical" evidence="1">
    <location>
        <begin position="73"/>
        <end position="93"/>
    </location>
</feature>
<feature type="transmembrane region" description="Helical" evidence="1">
    <location>
        <begin position="94"/>
        <end position="114"/>
    </location>
</feature>
<feature type="transmembrane region" description="Helical" evidence="1">
    <location>
        <begin position="132"/>
        <end position="152"/>
    </location>
</feature>
<feature type="transmembrane region" description="Helical" evidence="1">
    <location>
        <begin position="168"/>
        <end position="188"/>
    </location>
</feature>
<feature type="transmembrane region" description="Helical" evidence="1">
    <location>
        <begin position="199"/>
        <end position="219"/>
    </location>
</feature>
<feature type="transmembrane region" description="Helical" evidence="1">
    <location>
        <begin position="236"/>
        <end position="256"/>
    </location>
</feature>
<feature type="transmembrane region" description="Helical" evidence="1">
    <location>
        <begin position="263"/>
        <end position="283"/>
    </location>
</feature>
<feature type="transmembrane region" description="Helical" evidence="1">
    <location>
        <begin position="288"/>
        <end position="308"/>
    </location>
</feature>
<feature type="transmembrane region" description="Helical" evidence="1">
    <location>
        <begin position="338"/>
        <end position="358"/>
    </location>
</feature>
<protein>
    <recommendedName>
        <fullName evidence="1">Phospho-N-acetylmuramoyl-pentapeptide-transferase</fullName>
        <ecNumber evidence="1">2.7.8.13</ecNumber>
    </recommendedName>
    <alternativeName>
        <fullName evidence="1">UDP-MurNAc-pentapeptide phosphotransferase</fullName>
    </alternativeName>
</protein>
<organism>
    <name type="scientific">Pectobacterium carotovorum subsp. carotovorum (strain PC1)</name>
    <dbReference type="NCBI Taxonomy" id="561230"/>
    <lineage>
        <taxon>Bacteria</taxon>
        <taxon>Pseudomonadati</taxon>
        <taxon>Pseudomonadota</taxon>
        <taxon>Gammaproteobacteria</taxon>
        <taxon>Enterobacterales</taxon>
        <taxon>Pectobacteriaceae</taxon>
        <taxon>Pectobacterium</taxon>
    </lineage>
</organism>
<keyword id="KW-0131">Cell cycle</keyword>
<keyword id="KW-0132">Cell division</keyword>
<keyword id="KW-0997">Cell inner membrane</keyword>
<keyword id="KW-1003">Cell membrane</keyword>
<keyword id="KW-0133">Cell shape</keyword>
<keyword id="KW-0961">Cell wall biogenesis/degradation</keyword>
<keyword id="KW-0460">Magnesium</keyword>
<keyword id="KW-0472">Membrane</keyword>
<keyword id="KW-0479">Metal-binding</keyword>
<keyword id="KW-0573">Peptidoglycan synthesis</keyword>
<keyword id="KW-0808">Transferase</keyword>
<keyword id="KW-0812">Transmembrane</keyword>
<keyword id="KW-1133">Transmembrane helix</keyword>
<reference key="1">
    <citation type="submission" date="2009-07" db="EMBL/GenBank/DDBJ databases">
        <title>Complete sequence of Pectobacterium carotovorum subsp. carotovorum PC1.</title>
        <authorList>
            <consortium name="US DOE Joint Genome Institute"/>
            <person name="Lucas S."/>
            <person name="Copeland A."/>
            <person name="Lapidus A."/>
            <person name="Glavina del Rio T."/>
            <person name="Tice H."/>
            <person name="Bruce D."/>
            <person name="Goodwin L."/>
            <person name="Pitluck S."/>
            <person name="Munk A.C."/>
            <person name="Brettin T."/>
            <person name="Detter J.C."/>
            <person name="Han C."/>
            <person name="Tapia R."/>
            <person name="Larimer F."/>
            <person name="Land M."/>
            <person name="Hauser L."/>
            <person name="Kyrpides N."/>
            <person name="Mikhailova N."/>
            <person name="Balakrishnan V."/>
            <person name="Glasner J."/>
            <person name="Perna N.T."/>
        </authorList>
    </citation>
    <scope>NUCLEOTIDE SEQUENCE [LARGE SCALE GENOMIC DNA]</scope>
    <source>
        <strain>PC1</strain>
    </source>
</reference>
<sequence length="360" mass="39770">MLVWLAEHLAKLYTGFNVFSYLTFRAIVSLLTALVISLWMGPHMIAWLQRLQIGQVVRNEGPESHFSKRGTPTMGGVMILVAIIVSVLMWANLSNPYVWCVLLVLAGYGAVGFVDDYRKVVRKDTKGLIARWKYFWQSVIALVVAFSMYAIGKDTPATQLVVPFFKDVMPQLGLLYVALAYFVIVGTSNAVNLTDGLDGLAIMPTVFVAAGFALVAWATGNMNFAGYLHIPYIRHASELVIVCTAIVGAGLGFLWFNTYPAQVFMGDVGSLALGGALGTIAVLLRQEFLLVIMGGVFVVETLSVILQVGSFKLRGQRIFRMAPIHHHYELKGWPEPRVIVRFWIISLMLVLIGLATLKVR</sequence>
<proteinExistence type="inferred from homology"/>
<gene>
    <name evidence="1" type="primary">mraY</name>
    <name type="ordered locus">PC1_3595</name>
</gene>
<comment type="function">
    <text evidence="1">Catalyzes the initial step of the lipid cycle reactions in the biosynthesis of the cell wall peptidoglycan: transfers peptidoglycan precursor phospho-MurNAc-pentapeptide from UDP-MurNAc-pentapeptide onto the lipid carrier undecaprenyl phosphate, yielding undecaprenyl-pyrophosphoryl-MurNAc-pentapeptide, known as lipid I.</text>
</comment>
<comment type="catalytic activity">
    <reaction evidence="1">
        <text>UDP-N-acetyl-alpha-D-muramoyl-L-alanyl-gamma-D-glutamyl-meso-2,6-diaminopimeloyl-D-alanyl-D-alanine + di-trans,octa-cis-undecaprenyl phosphate = di-trans,octa-cis-undecaprenyl diphospho-N-acetyl-alpha-D-muramoyl-L-alanyl-D-glutamyl-meso-2,6-diaminopimeloyl-D-alanyl-D-alanine + UMP</text>
        <dbReference type="Rhea" id="RHEA:28386"/>
        <dbReference type="ChEBI" id="CHEBI:57865"/>
        <dbReference type="ChEBI" id="CHEBI:60392"/>
        <dbReference type="ChEBI" id="CHEBI:61386"/>
        <dbReference type="ChEBI" id="CHEBI:61387"/>
        <dbReference type="EC" id="2.7.8.13"/>
    </reaction>
</comment>
<comment type="cofactor">
    <cofactor evidence="1">
        <name>Mg(2+)</name>
        <dbReference type="ChEBI" id="CHEBI:18420"/>
    </cofactor>
</comment>
<comment type="pathway">
    <text evidence="1">Cell wall biogenesis; peptidoglycan biosynthesis.</text>
</comment>
<comment type="subcellular location">
    <subcellularLocation>
        <location evidence="1">Cell inner membrane</location>
        <topology evidence="1">Multi-pass membrane protein</topology>
    </subcellularLocation>
</comment>
<comment type="similarity">
    <text evidence="1">Belongs to the glycosyltransferase 4 family. MraY subfamily.</text>
</comment>